<name>EMT1_MYCMD</name>
<reference key="1">
    <citation type="journal article" date="2006" name="Nature">
        <title>Insights from the genome of the biotrophic fungal plant pathogen Ustilago maydis.</title>
        <authorList>
            <person name="Kaemper J."/>
            <person name="Kahmann R."/>
            <person name="Boelker M."/>
            <person name="Ma L.-J."/>
            <person name="Brefort T."/>
            <person name="Saville B.J."/>
            <person name="Banuett F."/>
            <person name="Kronstad J.W."/>
            <person name="Gold S.E."/>
            <person name="Mueller O."/>
            <person name="Perlin M.H."/>
            <person name="Woesten H.A.B."/>
            <person name="de Vries R."/>
            <person name="Ruiz-Herrera J."/>
            <person name="Reynaga-Pena C.G."/>
            <person name="Snetselaar K."/>
            <person name="McCann M."/>
            <person name="Perez-Martin J."/>
            <person name="Feldbruegge M."/>
            <person name="Basse C.W."/>
            <person name="Steinberg G."/>
            <person name="Ibeas J.I."/>
            <person name="Holloman W."/>
            <person name="Guzman P."/>
            <person name="Farman M.L."/>
            <person name="Stajich J.E."/>
            <person name="Sentandreu R."/>
            <person name="Gonzalez-Prieto J.M."/>
            <person name="Kennell J.C."/>
            <person name="Molina L."/>
            <person name="Schirawski J."/>
            <person name="Mendoza-Mendoza A."/>
            <person name="Greilinger D."/>
            <person name="Muench K."/>
            <person name="Roessel N."/>
            <person name="Scherer M."/>
            <person name="Vranes M."/>
            <person name="Ladendorf O."/>
            <person name="Vincon V."/>
            <person name="Fuchs U."/>
            <person name="Sandrock B."/>
            <person name="Meng S."/>
            <person name="Ho E.C.H."/>
            <person name="Cahill M.J."/>
            <person name="Boyce K.J."/>
            <person name="Klose J."/>
            <person name="Klosterman S.J."/>
            <person name="Deelstra H.J."/>
            <person name="Ortiz-Castellanos L."/>
            <person name="Li W."/>
            <person name="Sanchez-Alonso P."/>
            <person name="Schreier P.H."/>
            <person name="Haeuser-Hahn I."/>
            <person name="Vaupel M."/>
            <person name="Koopmann E."/>
            <person name="Friedrich G."/>
            <person name="Voss H."/>
            <person name="Schlueter T."/>
            <person name="Margolis J."/>
            <person name="Platt D."/>
            <person name="Swimmer C."/>
            <person name="Gnirke A."/>
            <person name="Chen F."/>
            <person name="Vysotskaia V."/>
            <person name="Mannhaupt G."/>
            <person name="Gueldener U."/>
            <person name="Muensterkoetter M."/>
            <person name="Haase D."/>
            <person name="Oesterheld M."/>
            <person name="Mewes H.-W."/>
            <person name="Mauceli E.W."/>
            <person name="DeCaprio D."/>
            <person name="Wade C.M."/>
            <person name="Butler J."/>
            <person name="Young S.K."/>
            <person name="Jaffe D.B."/>
            <person name="Calvo S.E."/>
            <person name="Nusbaum C."/>
            <person name="Galagan J.E."/>
            <person name="Birren B.W."/>
        </authorList>
    </citation>
    <scope>NUCLEOTIDE SEQUENCE [LARGE SCALE GENOMIC DNA]</scope>
    <source>
        <strain>DSM 14603 / FGSC 9021 / UM521</strain>
    </source>
</reference>
<reference key="2">
    <citation type="submission" date="2014-09" db="EMBL/GenBank/DDBJ databases">
        <authorList>
            <person name="Gueldener U."/>
            <person name="Muensterkoetter M."/>
            <person name="Walter M.C."/>
            <person name="Mannhaupt G."/>
            <person name="Kahmann R."/>
        </authorList>
    </citation>
    <scope>GENOME REANNOTATION</scope>
    <source>
        <strain>DSM 14603 / FGSC 9021 / UM521</strain>
    </source>
</reference>
<reference key="3">
    <citation type="journal article" date="2002" name="J. Biosci. Bioeng.">
        <title>Functions and potential applications of glycolipid biosurfactants--from energy-saving materials to gene delivery carriers.</title>
        <authorList>
            <person name="Kitamoto D."/>
            <person name="Isoda H."/>
            <person name="Nakahara T."/>
        </authorList>
    </citation>
    <scope>BIOTECHNOLOGY</scope>
</reference>
<reference key="4">
    <citation type="journal article" date="2005" name="Appl. Environ. Microbiol.">
        <title>Genetic analysis of biosurfactant production in Ustilago maydis.</title>
        <authorList>
            <person name="Hewald S."/>
            <person name="Josephs K."/>
            <person name="Boelker M."/>
        </authorList>
    </citation>
    <scope>FUNCTION</scope>
    <scope>CATALYTIC ACTIVITY</scope>
    <scope>INDUCTION</scope>
    <scope>DISRUPTION PHENOTYPE</scope>
</reference>
<reference key="5">
    <citation type="journal article" date="2006" name="Appl. Environ. Microbiol.">
        <title>Identification of a gene cluster for biosynthesis of mannosylerythritol lipids in the basidiomycetous fungus Ustilago maydis.</title>
        <authorList>
            <person name="Hewald S."/>
            <person name="Linne U."/>
            <person name="Scherer M."/>
            <person name="Marahiel M.A."/>
            <person name="Kaemper J."/>
            <person name="Boelker M."/>
        </authorList>
    </citation>
    <scope>FUNCTION</scope>
    <scope>PATHWAY</scope>
</reference>
<reference key="6">
    <citation type="journal article" date="2007" name="Colloids Surf. B Biointerfaces">
        <title>Kinetic studies on the interactions between glycolipid biosurfactant assembled monolayers and various classes of immunoglobulins using surface plasmon resonance.</title>
        <authorList>
            <person name="Ito S."/>
            <person name="Imura T."/>
            <person name="Fukuoka T."/>
            <person name="Morita T."/>
            <person name="Sakai H."/>
            <person name="Abe M."/>
            <person name="Kitamoto D."/>
        </authorList>
    </citation>
    <scope>BIOTECHNOLOGY</scope>
</reference>
<reference key="7">
    <citation type="journal article" date="2007" name="Langmuir">
        <title>Aqueous-phase behavior of natural glycolipid biosurfactant mannosylerythritol lipid A: sponge, cubic, and lamellar phases.</title>
        <authorList>
            <person name="Imura T."/>
            <person name="Hikosaka Y."/>
            <person name="Worakitkanchanakul W."/>
            <person name="Sakai H."/>
            <person name="Abe M."/>
            <person name="Konishi M."/>
            <person name="Minamikawa H."/>
            <person name="Kitamoto D."/>
        </authorList>
    </citation>
    <scope>BIOTECHNOLOGY</scope>
</reference>
<reference key="8">
    <citation type="journal article" date="2009" name="Biotechnol. Appl. Biochem.">
        <title>Production of glycolipid biosurfactants by basidiomycetous yeasts.</title>
        <authorList>
            <person name="Morita T."/>
            <person name="Fukuoka T."/>
            <person name="Imura T."/>
            <person name="Kitamoto D."/>
        </authorList>
    </citation>
    <scope>BIOTECHNOLOGY</scope>
</reference>
<reference key="9">
    <citation type="journal article" date="2009" name="Curr. Opin. Colloid Interface Sci.">
        <title>Self-assembling properties of glycolipid biosurfactants and their potential applications.</title>
        <authorList>
            <person name="Kitamoto D."/>
            <person name="Morita T."/>
            <person name="Fukuoka T."/>
            <person name="Konishi M."/>
            <person name="Imura T."/>
        </authorList>
    </citation>
    <scope>BIOTECHNOLOGY</scope>
</reference>
<reference key="10">
    <citation type="journal article" date="2014" name="Mol. Microbiol.">
        <title>Peroxisomes contribute to biosynthesis of extracellular glycolipids in fungi.</title>
        <authorList>
            <person name="Freitag J."/>
            <person name="Ast J."/>
            <person name="Linne U."/>
            <person name="Stehlik T."/>
            <person name="Martorana D."/>
            <person name="Boelker M."/>
            <person name="Sandrock B."/>
        </authorList>
    </citation>
    <scope>SUBCELLULAR LOCATION</scope>
    <scope>FUNCTION</scope>
</reference>
<reference key="11">
    <citation type="journal article" date="2019" name="Fungal Genet. Biol.">
        <title>Elucidation of substrate specificities of decorating enzymes involved in mannosylerythritol lipid production by cross-species complementation.</title>
        <authorList>
            <person name="Deinzer H.T."/>
            <person name="Linne U."/>
            <person name="Xie X."/>
            <person name="Boelker M."/>
            <person name="Sandrock B."/>
        </authorList>
    </citation>
    <scope>FUNCTION</scope>
</reference>
<gene>
    <name evidence="11" type="primary">EMT1</name>
    <name type="ORF">UMAG_03117</name>
</gene>
<protein>
    <recommendedName>
        <fullName evidence="11">Erythritol-mannosyl-transferase 1</fullName>
        <ecNumber evidence="2">2.4.1.-</ecNumber>
    </recommendedName>
    <alternativeName>
        <fullName evidence="12">Mannosylerythritol lipids (MELs) biosynthesis cluster protein EMT1</fullName>
    </alternativeName>
</protein>
<keyword id="KW-0328">Glycosyltransferase</keyword>
<keyword id="KW-0472">Membrane</keyword>
<keyword id="KW-1185">Reference proteome</keyword>
<keyword id="KW-0808">Transferase</keyword>
<keyword id="KW-0926">Vacuole</keyword>
<feature type="chain" id="PRO_0000449532" description="Erythritol-mannosyl-transferase 1">
    <location>
        <begin position="1"/>
        <end position="615"/>
    </location>
</feature>
<feature type="region of interest" description="Disordered" evidence="1">
    <location>
        <begin position="366"/>
        <end position="387"/>
    </location>
</feature>
<feature type="compositionally biased region" description="Polar residues" evidence="1">
    <location>
        <begin position="367"/>
        <end position="380"/>
    </location>
</feature>
<evidence type="ECO:0000256" key="1">
    <source>
        <dbReference type="SAM" id="MobiDB-lite"/>
    </source>
</evidence>
<evidence type="ECO:0000269" key="2">
    <source>
    </source>
</evidence>
<evidence type="ECO:0000269" key="3">
    <source>
    </source>
</evidence>
<evidence type="ECO:0000269" key="4">
    <source>
    </source>
</evidence>
<evidence type="ECO:0000269" key="5">
    <source>
    </source>
</evidence>
<evidence type="ECO:0000269" key="6">
    <source>
    </source>
</evidence>
<evidence type="ECO:0000269" key="7">
    <source>
    </source>
</evidence>
<evidence type="ECO:0000269" key="8">
    <source>
    </source>
</evidence>
<evidence type="ECO:0000269" key="9">
    <source>
    </source>
</evidence>
<evidence type="ECO:0000269" key="10">
    <source ref="9"/>
</evidence>
<evidence type="ECO:0000303" key="11">
    <source>
    </source>
</evidence>
<evidence type="ECO:0000303" key="12">
    <source>
    </source>
</evidence>
<evidence type="ECO:0000305" key="13"/>
<evidence type="ECO:0000305" key="14">
    <source>
    </source>
</evidence>
<dbReference type="EC" id="2.4.1.-" evidence="2"/>
<dbReference type="EMBL" id="CM003146">
    <property type="protein sequence ID" value="KIS69146.1"/>
    <property type="molecule type" value="Genomic_DNA"/>
</dbReference>
<dbReference type="RefSeq" id="XP_011389468.1">
    <property type="nucleotide sequence ID" value="XM_011391166.1"/>
</dbReference>
<dbReference type="STRING" id="237631.A0A0D1DZV5"/>
<dbReference type="EnsemblFungi" id="KIS69146">
    <property type="protein sequence ID" value="KIS69146"/>
    <property type="gene ID" value="UMAG_03117"/>
</dbReference>
<dbReference type="GeneID" id="23563678"/>
<dbReference type="KEGG" id="uma:UMAG_03117"/>
<dbReference type="VEuPathDB" id="FungiDB:UMAG_03117"/>
<dbReference type="eggNOG" id="ENOG502QUA1">
    <property type="taxonomic scope" value="Eukaryota"/>
</dbReference>
<dbReference type="InParanoid" id="A0A0D1DZV5"/>
<dbReference type="OrthoDB" id="5835829at2759"/>
<dbReference type="BioCyc" id="MetaCyc:MONOMER-22102"/>
<dbReference type="Proteomes" id="UP000000561">
    <property type="component" value="Chromosome 7"/>
</dbReference>
<dbReference type="GO" id="GO:0005774">
    <property type="term" value="C:vacuolar membrane"/>
    <property type="evidence" value="ECO:0007669"/>
    <property type="project" value="UniProtKB-SubCell"/>
</dbReference>
<dbReference type="GO" id="GO:0008194">
    <property type="term" value="F:UDP-glycosyltransferase activity"/>
    <property type="evidence" value="ECO:0000318"/>
    <property type="project" value="GO_Central"/>
</dbReference>
<dbReference type="Gene3D" id="3.40.50.2000">
    <property type="entry name" value="Glycogen Phosphorylase B"/>
    <property type="match status" value="2"/>
</dbReference>
<dbReference type="InterPro" id="IPR050271">
    <property type="entry name" value="UDP-glycosyltransferase"/>
</dbReference>
<dbReference type="PANTHER" id="PTHR48043">
    <property type="entry name" value="EG:EG0003.4 PROTEIN-RELATED"/>
    <property type="match status" value="1"/>
</dbReference>
<dbReference type="PANTHER" id="PTHR48043:SF151">
    <property type="entry name" value="GLYCOSYLTRANSFERASE FAMILY 1 PROTEIN"/>
    <property type="match status" value="1"/>
</dbReference>
<dbReference type="SUPFAM" id="SSF53756">
    <property type="entry name" value="UDP-Glycosyltransferase/glycogen phosphorylase"/>
    <property type="match status" value="1"/>
</dbReference>
<proteinExistence type="evidence at protein level"/>
<accession>A0A0D1DZV5</accession>
<comment type="function">
    <text evidence="2 4 8 9">Erythritol-mannosyl-transferase; part of the gene cluster that mediates the biosynthesis of mannosylerythritol lipids (MELs), surface-active substances that enhance the availability of water-insoluble substrates (PubMed:15932999, PubMed:16885300). Mannosylerythritol lipid production is responsible for hemolytic activity of Ustilago maydis (PubMed:15932999). Depending on the number of acetyl groups, mannosylerythritol lipids can be differentiated into MEL A (fully acetylated), MEL B and MEL C (monoacetylated at R-6 and R-4, respectively), and the fully deacetylated MEL D (PubMed:31103599). The first step in the pathway is the generation of mannosylerythritol by the glycosyltransferase EMT1 which catalyzes the transfer of GDP-mannose to the C-4 atom of meso-erythritol (PubMed:15932999). This reaction has to be stereospecific, since only mannosyl-D-erythritol is generated (PubMed:15932999). The produced disaccharide is subsequently acylated with fatty acids of various lengths derived from the peroxisomal beta-oxidation by the peroxisomal acyltransferases MAC1 and MAC2 at positions C-2 and C-3, repectively (PubMed:16885300, PubMed:24835306, PubMed:31103599). The existence of MEL derivatives which carry an acetyl group at C-2 implies that at least MAC1 also accepts acetyl-CoA as a donor (PubMed:15932999). The final step of MEL biosynthesis is the acetylation of the fully acylated mannosylerythritol lipids catalyzed by the acetyl-CoA-dependent acetyltransferase MAT1 (PubMed:16885300). MAT1 displays a relaxed regioselectivity and is able to transfer acetylgroups to both positions C-4 and C-6 of the mannosyl moiety (PubMed:15932999).</text>
</comment>
<comment type="pathway">
    <text evidence="2">Secondary metabolite biosynthesis.</text>
</comment>
<comment type="subcellular location">
    <subcellularLocation>
        <location evidence="8">Vacuole membrane</location>
        <topology evidence="14">Peripheral membrane protein</topology>
    </subcellularLocation>
</comment>
<comment type="induction">
    <text evidence="2">Expression is induced under conditions of nitrogen starvation.</text>
</comment>
<comment type="disruption phenotype">
    <text evidence="2">Impairs the production of mannosylerythritol lipids (MELs) and leads the sticking of cells to each other in hydrophobic environment (PubMed:15932999). Does not affect the virulence (PubMed:15932999).</text>
</comment>
<comment type="biotechnology">
    <text evidence="3 5 6 7 10">MELs not only have high potential as eco-friendly biosurfactants due to their excellent surface activity, but also have attracted considerable recent interest because of thei runique properties, including self-assembly, anti-tumor and cell differentiation induction activities, and moisturizing and hair-repairing properties.</text>
</comment>
<comment type="similarity">
    <text evidence="13">Belongs to the UDP-glycosyltransferase family.</text>
</comment>
<organism>
    <name type="scientific">Mycosarcoma maydis</name>
    <name type="common">Corn smut fungus</name>
    <name type="synonym">Ustilago maydis</name>
    <dbReference type="NCBI Taxonomy" id="5270"/>
    <lineage>
        <taxon>Eukaryota</taxon>
        <taxon>Fungi</taxon>
        <taxon>Dikarya</taxon>
        <taxon>Basidiomycota</taxon>
        <taxon>Ustilaginomycotina</taxon>
        <taxon>Ustilaginomycetes</taxon>
        <taxon>Ustilaginales</taxon>
        <taxon>Ustilaginaceae</taxon>
        <taxon>Mycosarcoma</taxon>
    </lineage>
</organism>
<sequence length="615" mass="68132">MKVALLANPARGEINVLLATAYELIRLGHDVTFLTGSSFANAIAEFRSEQNDPILAARIHFSDLGNARAVEDFTRGMQSHLKGLRKPPGDYSSMEICQIVALVTEQEFRDAATMVRDRLLEIEPDMIAVDALSPNLVTGCRMTGLPWMFTVPCSPSLTATRKSLFDPHPMGRRRQRTLMSALENLKLTFIETYRNATKKDLYARRALLKNEFGLNSMGFNGDSAIVPPLWKDRNCVGGIHFNTPGLTDSIRQPHQIHFVGAGVTSDPENHDTPVFEAASFLKQLSPSSSTTFKPLFPPLSKTGRDLDVEWMDEAYAAGQLVVYLNMGSMFLWTDAEVRSCLRAFERLYEQSGGKIKLLFKLNKPKRTPNNTGASTPTAPISSPDFEEKQRTVMGSARPVGASNLVSEKLADAIKNVTPRRKTDADKGYSQFTLSEFEGLEYVRFTRWVHDQRSIYKHPALRVVIHHGGGNSFNEAVHYALPQMILSQWFDTHEYAILAERFGIGLRSKHAPKIDENDLVNTMTRLLQGPEAEKIRRNAKVWSIRSRNAGGAPAAARLIEAQAMLFNQQKQLELAASEVRAAVDTLSGKSSVADLESETAFTPNMLSGAASTVGSD</sequence>